<evidence type="ECO:0000250" key="1">
    <source>
        <dbReference type="UniProtKB" id="P83923"/>
    </source>
</evidence>
<evidence type="ECO:0000250" key="2">
    <source>
        <dbReference type="UniProtKB" id="P84375"/>
    </source>
</evidence>
<evidence type="ECO:0000255" key="3"/>
<evidence type="ECO:0000269" key="4">
    <source>
    </source>
</evidence>
<evidence type="ECO:0000303" key="5">
    <source>
    </source>
</evidence>
<evidence type="ECO:0000305" key="6"/>
<accession>P86655</accession>
<organism>
    <name type="scientific">Hoplocoryphella grandis</name>
    <name type="common">Stick mantid</name>
    <dbReference type="NCBI Taxonomy" id="765345"/>
    <lineage>
        <taxon>Eukaryota</taxon>
        <taxon>Metazoa</taxon>
        <taxon>Ecdysozoa</taxon>
        <taxon>Arthropoda</taxon>
        <taxon>Hexapoda</taxon>
        <taxon>Insecta</taxon>
        <taxon>Pterygota</taxon>
        <taxon>Neoptera</taxon>
        <taxon>Polyneoptera</taxon>
        <taxon>Dictyoptera</taxon>
        <taxon>Mantodea</taxon>
        <taxon>Eumantodea</taxon>
        <taxon>Thespoidea</taxon>
        <taxon>Thespidae</taxon>
        <taxon>Hoplocoryphinae</taxon>
        <taxon>Hoplocoryphella</taxon>
    </lineage>
</organism>
<name>PVK1_HOPGR</name>
<sequence length="9" mass="1026">QGLIPFPRV</sequence>
<reference evidence="6" key="1">
    <citation type="journal article" date="2010" name="Peptides">
        <title>CAPA-peptides of praying mantids (Mantodea).</title>
        <authorList>
            <person name="Koehler R."/>
            <person name="Predel R."/>
        </authorList>
    </citation>
    <scope>PROTEIN SEQUENCE</scope>
    <scope>MASS SPECTROMETRY</scope>
    <scope>PYROGLUTAMATE FORMATION AT GLN-1</scope>
    <scope>AMIDATION AT VAL-9</scope>
    <source>
        <tissue evidence="4">Abdominal perisympathetic organs</tissue>
    </source>
</reference>
<keyword id="KW-0027">Amidation</keyword>
<keyword id="KW-0903">Direct protein sequencing</keyword>
<keyword id="KW-0527">Neuropeptide</keyword>
<keyword id="KW-0873">Pyrrolidone carboxylic acid</keyword>
<keyword id="KW-0964">Secreted</keyword>
<proteinExistence type="evidence at protein level"/>
<protein>
    <recommendedName>
        <fullName evidence="5">Periviscerokinin-1</fullName>
    </recommendedName>
</protein>
<comment type="function">
    <text evidence="1">Mediates visceral muscle contractile activity (myotropic activity).</text>
</comment>
<comment type="subcellular location">
    <subcellularLocation>
        <location evidence="2">Secreted</location>
    </subcellularLocation>
</comment>
<comment type="mass spectrometry" mass="1025.6" method="MALDI" evidence="4"/>
<comment type="mass spectrometry" mass="1008.6" method="MALDI" evidence="4">
    <text>With pyroglutamate at Gln-1.</text>
</comment>
<comment type="similarity">
    <text evidence="3">Belongs to the periviscerokinin family.</text>
</comment>
<dbReference type="GO" id="GO:0005576">
    <property type="term" value="C:extracellular region"/>
    <property type="evidence" value="ECO:0007669"/>
    <property type="project" value="UniProtKB-SubCell"/>
</dbReference>
<dbReference type="GO" id="GO:0007218">
    <property type="term" value="P:neuropeptide signaling pathway"/>
    <property type="evidence" value="ECO:0007669"/>
    <property type="project" value="UniProtKB-KW"/>
</dbReference>
<dbReference type="InterPro" id="IPR013231">
    <property type="entry name" value="Periviscerokinin"/>
</dbReference>
<dbReference type="Pfam" id="PF08259">
    <property type="entry name" value="Periviscerokin"/>
    <property type="match status" value="1"/>
</dbReference>
<feature type="peptide" id="PRO_0000395569" description="Periviscerokinin-1" evidence="4">
    <location>
        <begin position="1"/>
        <end position="9"/>
    </location>
</feature>
<feature type="modified residue" description="Pyrrolidone carboxylic acid; partial" evidence="4">
    <location>
        <position position="1"/>
    </location>
</feature>
<feature type="modified residue" description="Valine amide" evidence="4">
    <location>
        <position position="9"/>
    </location>
</feature>
<feature type="unsure residue" description="L or I" evidence="4">
    <location>
        <position position="3"/>
    </location>
</feature>
<feature type="unsure residue" description="I or L" evidence="4">
    <location>
        <position position="4"/>
    </location>
</feature>